<name>YIHI_PASMU</name>
<evidence type="ECO:0000255" key="1">
    <source>
        <dbReference type="HAMAP-Rule" id="MF_01058"/>
    </source>
</evidence>
<evidence type="ECO:0000256" key="2">
    <source>
        <dbReference type="SAM" id="MobiDB-lite"/>
    </source>
</evidence>
<proteinExistence type="inferred from homology"/>
<organism>
    <name type="scientific">Pasteurella multocida (strain Pm70)</name>
    <dbReference type="NCBI Taxonomy" id="272843"/>
    <lineage>
        <taxon>Bacteria</taxon>
        <taxon>Pseudomonadati</taxon>
        <taxon>Pseudomonadota</taxon>
        <taxon>Gammaproteobacteria</taxon>
        <taxon>Pasteurellales</taxon>
        <taxon>Pasteurellaceae</taxon>
        <taxon>Pasteurella</taxon>
    </lineage>
</organism>
<reference key="1">
    <citation type="journal article" date="2001" name="Proc. Natl. Acad. Sci. U.S.A.">
        <title>Complete genomic sequence of Pasteurella multocida Pm70.</title>
        <authorList>
            <person name="May B.J."/>
            <person name="Zhang Q."/>
            <person name="Li L.L."/>
            <person name="Paustian M.L."/>
            <person name="Whittam T.S."/>
            <person name="Kapur V."/>
        </authorList>
    </citation>
    <scope>NUCLEOTIDE SEQUENCE [LARGE SCALE GENOMIC DNA]</scope>
    <source>
        <strain>Pm70</strain>
    </source>
</reference>
<dbReference type="EMBL" id="AE004439">
    <property type="protein sequence ID" value="AAK03919.1"/>
    <property type="molecule type" value="Genomic_DNA"/>
</dbReference>
<dbReference type="RefSeq" id="WP_010907368.1">
    <property type="nucleotide sequence ID" value="NC_002663.1"/>
</dbReference>
<dbReference type="SMR" id="Q9CK03"/>
<dbReference type="STRING" id="272843.PM1835"/>
<dbReference type="EnsemblBacteria" id="AAK03919">
    <property type="protein sequence ID" value="AAK03919"/>
    <property type="gene ID" value="PM1835"/>
</dbReference>
<dbReference type="KEGG" id="pmu:PM1835"/>
<dbReference type="PATRIC" id="fig|272843.6.peg.1859"/>
<dbReference type="HOGENOM" id="CLU_094104_2_0_6"/>
<dbReference type="OrthoDB" id="5677577at2"/>
<dbReference type="Proteomes" id="UP000000809">
    <property type="component" value="Chromosome"/>
</dbReference>
<dbReference type="GO" id="GO:0005096">
    <property type="term" value="F:GTPase activator activity"/>
    <property type="evidence" value="ECO:0007669"/>
    <property type="project" value="UniProtKB-KW"/>
</dbReference>
<dbReference type="GO" id="GO:0042254">
    <property type="term" value="P:ribosome biogenesis"/>
    <property type="evidence" value="ECO:0007669"/>
    <property type="project" value="UniProtKB-KW"/>
</dbReference>
<dbReference type="HAMAP" id="MF_01058">
    <property type="entry name" value="GAP_YihI"/>
    <property type="match status" value="1"/>
</dbReference>
<dbReference type="InterPro" id="IPR007336">
    <property type="entry name" value="YihI"/>
</dbReference>
<dbReference type="NCBIfam" id="NF003560">
    <property type="entry name" value="PRK05244.1-1"/>
    <property type="match status" value="1"/>
</dbReference>
<dbReference type="Pfam" id="PF04220">
    <property type="entry name" value="YihI"/>
    <property type="match status" value="1"/>
</dbReference>
<accession>Q9CK03</accession>
<sequence>MARKKKTRRVSDIMPARKVDKKVELPKGKQGKKLTRYELDAKAREDKKKKKRKGLASGSRHSATENNNNHQALAKKDPRLGSRKKVPLIVEFVNKPEKGMTIPPMKVEEKVAKLDPMLELEQLENNECLNQLLDALDAGKTLSAEDQQFVDDCLDRIAQLMDELGISEDDDPEEDLLRTFEKIDINQFR</sequence>
<feature type="chain" id="PRO_0000209588" description="Der GTPase-activating protein YihI">
    <location>
        <begin position="1"/>
        <end position="189"/>
    </location>
</feature>
<feature type="region of interest" description="Disordered" evidence="2">
    <location>
        <begin position="1"/>
        <end position="81"/>
    </location>
</feature>
<feature type="compositionally biased region" description="Basic and acidic residues" evidence="2">
    <location>
        <begin position="9"/>
        <end position="27"/>
    </location>
</feature>
<feature type="compositionally biased region" description="Basic and acidic residues" evidence="2">
    <location>
        <begin position="35"/>
        <end position="46"/>
    </location>
</feature>
<feature type="compositionally biased region" description="Polar residues" evidence="2">
    <location>
        <begin position="60"/>
        <end position="71"/>
    </location>
</feature>
<protein>
    <recommendedName>
        <fullName evidence="1">Der GTPase-activating protein YihI</fullName>
    </recommendedName>
</protein>
<keyword id="KW-0343">GTPase activation</keyword>
<keyword id="KW-1185">Reference proteome</keyword>
<keyword id="KW-0690">Ribosome biogenesis</keyword>
<comment type="function">
    <text evidence="1">A GTPase-activating protein (GAP) that modifies Der/EngA GTPase function. May play a role in ribosome biogenesis.</text>
</comment>
<comment type="subunit">
    <text evidence="1">Interacts with Der.</text>
</comment>
<comment type="similarity">
    <text evidence="1">Belongs to the YihI family.</text>
</comment>
<gene>
    <name evidence="1" type="primary">yihI</name>
    <name type="ordered locus">PM1835</name>
</gene>